<feature type="chain" id="PRO_1000015576" description="33 kDa chaperonin">
    <location>
        <begin position="1"/>
        <end position="293"/>
    </location>
</feature>
<feature type="disulfide bond" description="Redox-active" evidence="1">
    <location>
        <begin position="238"/>
        <end position="240"/>
    </location>
</feature>
<feature type="disulfide bond" description="Redox-active" evidence="1">
    <location>
        <begin position="271"/>
        <end position="274"/>
    </location>
</feature>
<dbReference type="EMBL" id="CP000253">
    <property type="protein sequence ID" value="ABD29640.1"/>
    <property type="molecule type" value="Genomic_DNA"/>
</dbReference>
<dbReference type="RefSeq" id="WP_000148605.1">
    <property type="nucleotide sequence ID" value="NZ_LS483365.1"/>
</dbReference>
<dbReference type="RefSeq" id="YP_499064.1">
    <property type="nucleotide sequence ID" value="NC_007795.1"/>
</dbReference>
<dbReference type="SMR" id="Q2G0Q9"/>
<dbReference type="STRING" id="93061.SAOUHSC_00487"/>
<dbReference type="PaxDb" id="1280-SAXN108_0564"/>
<dbReference type="GeneID" id="3920345"/>
<dbReference type="KEGG" id="sao:SAOUHSC_00487"/>
<dbReference type="PATRIC" id="fig|93061.5.peg.439"/>
<dbReference type="eggNOG" id="COG1281">
    <property type="taxonomic scope" value="Bacteria"/>
</dbReference>
<dbReference type="HOGENOM" id="CLU_054493_1_0_9"/>
<dbReference type="OrthoDB" id="9776534at2"/>
<dbReference type="PRO" id="PR:Q2G0Q9"/>
<dbReference type="Proteomes" id="UP000008816">
    <property type="component" value="Chromosome"/>
</dbReference>
<dbReference type="GO" id="GO:0005737">
    <property type="term" value="C:cytoplasm"/>
    <property type="evidence" value="ECO:0000318"/>
    <property type="project" value="GO_Central"/>
</dbReference>
<dbReference type="GO" id="GO:0044183">
    <property type="term" value="F:protein folding chaperone"/>
    <property type="evidence" value="ECO:0000318"/>
    <property type="project" value="GO_Central"/>
</dbReference>
<dbReference type="GO" id="GO:0051082">
    <property type="term" value="F:unfolded protein binding"/>
    <property type="evidence" value="ECO:0007669"/>
    <property type="project" value="UniProtKB-UniRule"/>
</dbReference>
<dbReference type="GO" id="GO:0042026">
    <property type="term" value="P:protein refolding"/>
    <property type="evidence" value="ECO:0000318"/>
    <property type="project" value="GO_Central"/>
</dbReference>
<dbReference type="CDD" id="cd00498">
    <property type="entry name" value="Hsp33"/>
    <property type="match status" value="1"/>
</dbReference>
<dbReference type="Gene3D" id="3.55.30.10">
    <property type="entry name" value="Hsp33 domain"/>
    <property type="match status" value="1"/>
</dbReference>
<dbReference type="Gene3D" id="3.90.1280.10">
    <property type="entry name" value="HSP33 redox switch-like"/>
    <property type="match status" value="1"/>
</dbReference>
<dbReference type="HAMAP" id="MF_00117">
    <property type="entry name" value="HslO"/>
    <property type="match status" value="1"/>
</dbReference>
<dbReference type="InterPro" id="IPR000397">
    <property type="entry name" value="Heat_shock_Hsp33"/>
</dbReference>
<dbReference type="InterPro" id="IPR016154">
    <property type="entry name" value="Heat_shock_Hsp33_C"/>
</dbReference>
<dbReference type="InterPro" id="IPR016153">
    <property type="entry name" value="Heat_shock_Hsp33_N"/>
</dbReference>
<dbReference type="NCBIfam" id="NF001033">
    <property type="entry name" value="PRK00114.1"/>
    <property type="match status" value="1"/>
</dbReference>
<dbReference type="PANTHER" id="PTHR30111">
    <property type="entry name" value="33 KDA CHAPERONIN"/>
    <property type="match status" value="1"/>
</dbReference>
<dbReference type="PANTHER" id="PTHR30111:SF1">
    <property type="entry name" value="33 KDA CHAPERONIN"/>
    <property type="match status" value="1"/>
</dbReference>
<dbReference type="Pfam" id="PF01430">
    <property type="entry name" value="HSP33"/>
    <property type="match status" value="1"/>
</dbReference>
<dbReference type="PIRSF" id="PIRSF005261">
    <property type="entry name" value="Heat_shock_Hsp33"/>
    <property type="match status" value="1"/>
</dbReference>
<dbReference type="SUPFAM" id="SSF64397">
    <property type="entry name" value="Hsp33 domain"/>
    <property type="match status" value="1"/>
</dbReference>
<dbReference type="SUPFAM" id="SSF118352">
    <property type="entry name" value="HSP33 redox switch-like"/>
    <property type="match status" value="1"/>
</dbReference>
<reference key="1">
    <citation type="book" date="2006" name="Gram positive pathogens, 2nd edition">
        <title>The Staphylococcus aureus NCTC 8325 genome.</title>
        <editorList>
            <person name="Fischetti V."/>
            <person name="Novick R."/>
            <person name="Ferretti J."/>
            <person name="Portnoy D."/>
            <person name="Rood J."/>
        </editorList>
        <authorList>
            <person name="Gillaspy A.F."/>
            <person name="Worrell V."/>
            <person name="Orvis J."/>
            <person name="Roe B.A."/>
            <person name="Dyer D.W."/>
            <person name="Iandolo J.J."/>
        </authorList>
    </citation>
    <scope>NUCLEOTIDE SEQUENCE [LARGE SCALE GENOMIC DNA]</scope>
    <source>
        <strain>NCTC 8325 / PS 47</strain>
    </source>
</reference>
<proteinExistence type="inferred from homology"/>
<gene>
    <name evidence="1" type="primary">hslO</name>
    <name type="ordered locus">SAOUHSC_00487</name>
</gene>
<name>HSLO_STAA8</name>
<sequence length="293" mass="31822">MTHDYIVKALAFDGEIRAYAALTTETVQEAQTRHYTWPTASAAMGRTMTATAMMGAMLKGDQKLTVTVDGQGPIGRIIADANAKGEVRAYVDHPQTHFPLNEQGKLDVRRAVGTNGSIMVVKDVGMKDYFSGASPIVSGELGEDFTYYYATSEQTPSSVGLGVLVNPDNTIKAAGGFIIQVMPGAKDETISKLEKAISEMTPVSKLIEQGLTPEGLLNEILGEDHVQILEKMPVQFECNCSHEKFLNAIKGLGEAEIQNMIKEDHGAEAVCHFCGNKYKYTEEELNVLLESLA</sequence>
<organism>
    <name type="scientific">Staphylococcus aureus (strain NCTC 8325 / PS 47)</name>
    <dbReference type="NCBI Taxonomy" id="93061"/>
    <lineage>
        <taxon>Bacteria</taxon>
        <taxon>Bacillati</taxon>
        <taxon>Bacillota</taxon>
        <taxon>Bacilli</taxon>
        <taxon>Bacillales</taxon>
        <taxon>Staphylococcaceae</taxon>
        <taxon>Staphylococcus</taxon>
    </lineage>
</organism>
<comment type="function">
    <text evidence="1">Redox regulated molecular chaperone. Protects both thermally unfolding and oxidatively damaged proteins from irreversible aggregation. Plays an important role in the bacterial defense system toward oxidative stress.</text>
</comment>
<comment type="subcellular location">
    <subcellularLocation>
        <location evidence="1">Cytoplasm</location>
    </subcellularLocation>
</comment>
<comment type="PTM">
    <text evidence="1">Under oxidizing conditions two disulfide bonds are formed involving the reactive cysteines. Under reducing conditions zinc is bound to the reactive cysteines and the protein is inactive.</text>
</comment>
<comment type="similarity">
    <text evidence="1">Belongs to the HSP33 family.</text>
</comment>
<evidence type="ECO:0000255" key="1">
    <source>
        <dbReference type="HAMAP-Rule" id="MF_00117"/>
    </source>
</evidence>
<protein>
    <recommendedName>
        <fullName evidence="1">33 kDa chaperonin</fullName>
    </recommendedName>
    <alternativeName>
        <fullName evidence="1">Heat shock protein 33 homolog</fullName>
        <shortName evidence="1">HSP33</shortName>
    </alternativeName>
</protein>
<accession>Q2G0Q9</accession>
<keyword id="KW-0143">Chaperone</keyword>
<keyword id="KW-0963">Cytoplasm</keyword>
<keyword id="KW-1015">Disulfide bond</keyword>
<keyword id="KW-0676">Redox-active center</keyword>
<keyword id="KW-1185">Reference proteome</keyword>
<keyword id="KW-0862">Zinc</keyword>